<keyword id="KW-0378">Hydrolase</keyword>
<keyword id="KW-0539">Nucleus</keyword>
<keyword id="KW-0597">Phosphoprotein</keyword>
<keyword id="KW-0645">Protease</keyword>
<keyword id="KW-1185">Reference proteome</keyword>
<keyword id="KW-0788">Thiol protease</keyword>
<keyword id="KW-0833">Ubl conjugation pathway</keyword>
<sequence length="638" mass="71917">MRDSKDALDDKSGSFTSLLPPFGKQRGTSPNDAIPIKSPLERLANSVTSPEKPTVRTAIQKDSPRRKQIDDDQTPPKHLKRSFQNVTVVSPRKKKTIDVVELPFTKGGYGGFYDPRPGCLKFTTHEINVSYTDTSIPVIHIPVQLLKRCCWLQGWRDNLVESPVHAIHLTLKNRDMKRITIGDSASLLFLYNPLHVESARAGLDLLDQSDFSLTSPSSAKEFKQLLTLKQSTIIPRTPQKTVRSIVKQTSSPHSSKMPKHSLPSSPTPFNSNSGDSLLSRIKNSNQSSSERPTANNGAQEQNQSSSSAGNTSNDFSTLCSQGSDKTLLSDASCTTILVYPFSGTNSIAITNTDLTRLNEGEFLNDTIVDFYLRYLYCKLQTQNPSLANDTHIFNTFFYNRLTSKDKDGKRLGHRGVRKWTQKVDLFHKKYIIVPINETFHWYLAIICNIDRLMPVDTKLEEQDEIVMSSVEQPSASKTRQAELTSNSPAILIFDSLANLHKGALNYLREYLLEEAFERKNVHLKSTDIRGFHAKVPQQSNFSDCGIYALHFVELFLETPEQVIANTLDKSLRRTDAKNFDQQWNLQKINTMRCDLKGLIRRLSTEWSSNNERQSLSSGSNDEEDKENDDDLAILPITN</sequence>
<gene>
    <name type="primary">ulp2</name>
    <name type="ORF">SPAC17A5.07c</name>
</gene>
<name>ULP2_SCHPO</name>
<organism>
    <name type="scientific">Schizosaccharomyces pombe (strain 972 / ATCC 24843)</name>
    <name type="common">Fission yeast</name>
    <dbReference type="NCBI Taxonomy" id="284812"/>
    <lineage>
        <taxon>Eukaryota</taxon>
        <taxon>Fungi</taxon>
        <taxon>Dikarya</taxon>
        <taxon>Ascomycota</taxon>
        <taxon>Taphrinomycotina</taxon>
        <taxon>Schizosaccharomycetes</taxon>
        <taxon>Schizosaccharomycetales</taxon>
        <taxon>Schizosaccharomycetaceae</taxon>
        <taxon>Schizosaccharomyces</taxon>
    </lineage>
</organism>
<reference key="1">
    <citation type="journal article" date="2002" name="Nature">
        <title>The genome sequence of Schizosaccharomyces pombe.</title>
        <authorList>
            <person name="Wood V."/>
            <person name="Gwilliam R."/>
            <person name="Rajandream M.A."/>
            <person name="Lyne M.H."/>
            <person name="Lyne R."/>
            <person name="Stewart A."/>
            <person name="Sgouros J.G."/>
            <person name="Peat N."/>
            <person name="Hayles J."/>
            <person name="Baker S.G."/>
            <person name="Basham D."/>
            <person name="Bowman S."/>
            <person name="Brooks K."/>
            <person name="Brown D."/>
            <person name="Brown S."/>
            <person name="Chillingworth T."/>
            <person name="Churcher C.M."/>
            <person name="Collins M."/>
            <person name="Connor R."/>
            <person name="Cronin A."/>
            <person name="Davis P."/>
            <person name="Feltwell T."/>
            <person name="Fraser A."/>
            <person name="Gentles S."/>
            <person name="Goble A."/>
            <person name="Hamlin N."/>
            <person name="Harris D.E."/>
            <person name="Hidalgo J."/>
            <person name="Hodgson G."/>
            <person name="Holroyd S."/>
            <person name="Hornsby T."/>
            <person name="Howarth S."/>
            <person name="Huckle E.J."/>
            <person name="Hunt S."/>
            <person name="Jagels K."/>
            <person name="James K.D."/>
            <person name="Jones L."/>
            <person name="Jones M."/>
            <person name="Leather S."/>
            <person name="McDonald S."/>
            <person name="McLean J."/>
            <person name="Mooney P."/>
            <person name="Moule S."/>
            <person name="Mungall K.L."/>
            <person name="Murphy L.D."/>
            <person name="Niblett D."/>
            <person name="Odell C."/>
            <person name="Oliver K."/>
            <person name="O'Neil S."/>
            <person name="Pearson D."/>
            <person name="Quail M.A."/>
            <person name="Rabbinowitsch E."/>
            <person name="Rutherford K.M."/>
            <person name="Rutter S."/>
            <person name="Saunders D."/>
            <person name="Seeger K."/>
            <person name="Sharp S."/>
            <person name="Skelton J."/>
            <person name="Simmonds M.N."/>
            <person name="Squares R."/>
            <person name="Squares S."/>
            <person name="Stevens K."/>
            <person name="Taylor K."/>
            <person name="Taylor R.G."/>
            <person name="Tivey A."/>
            <person name="Walsh S.V."/>
            <person name="Warren T."/>
            <person name="Whitehead S."/>
            <person name="Woodward J.R."/>
            <person name="Volckaert G."/>
            <person name="Aert R."/>
            <person name="Robben J."/>
            <person name="Grymonprez B."/>
            <person name="Weltjens I."/>
            <person name="Vanstreels E."/>
            <person name="Rieger M."/>
            <person name="Schaefer M."/>
            <person name="Mueller-Auer S."/>
            <person name="Gabel C."/>
            <person name="Fuchs M."/>
            <person name="Duesterhoeft A."/>
            <person name="Fritzc C."/>
            <person name="Holzer E."/>
            <person name="Moestl D."/>
            <person name="Hilbert H."/>
            <person name="Borzym K."/>
            <person name="Langer I."/>
            <person name="Beck A."/>
            <person name="Lehrach H."/>
            <person name="Reinhardt R."/>
            <person name="Pohl T.M."/>
            <person name="Eger P."/>
            <person name="Zimmermann W."/>
            <person name="Wedler H."/>
            <person name="Wambutt R."/>
            <person name="Purnelle B."/>
            <person name="Goffeau A."/>
            <person name="Cadieu E."/>
            <person name="Dreano S."/>
            <person name="Gloux S."/>
            <person name="Lelaure V."/>
            <person name="Mottier S."/>
            <person name="Galibert F."/>
            <person name="Aves S.J."/>
            <person name="Xiang Z."/>
            <person name="Hunt C."/>
            <person name="Moore K."/>
            <person name="Hurst S.M."/>
            <person name="Lucas M."/>
            <person name="Rochet M."/>
            <person name="Gaillardin C."/>
            <person name="Tallada V.A."/>
            <person name="Garzon A."/>
            <person name="Thode G."/>
            <person name="Daga R.R."/>
            <person name="Cruzado L."/>
            <person name="Jimenez J."/>
            <person name="Sanchez M."/>
            <person name="del Rey F."/>
            <person name="Benito J."/>
            <person name="Dominguez A."/>
            <person name="Revuelta J.L."/>
            <person name="Moreno S."/>
            <person name="Armstrong J."/>
            <person name="Forsburg S.L."/>
            <person name="Cerutti L."/>
            <person name="Lowe T."/>
            <person name="McCombie W.R."/>
            <person name="Paulsen I."/>
            <person name="Potashkin J."/>
            <person name="Shpakovski G.V."/>
            <person name="Ussery D."/>
            <person name="Barrell B.G."/>
            <person name="Nurse P."/>
        </authorList>
    </citation>
    <scope>NUCLEOTIDE SEQUENCE [LARGE SCALE GENOMIC DNA]</scope>
    <source>
        <strain>972 / ATCC 24843</strain>
    </source>
</reference>
<reference key="2">
    <citation type="journal article" date="2011" name="Science">
        <title>Comparative functional genomics of the fission yeasts.</title>
        <authorList>
            <person name="Rhind N."/>
            <person name="Chen Z."/>
            <person name="Yassour M."/>
            <person name="Thompson D.A."/>
            <person name="Haas B.J."/>
            <person name="Habib N."/>
            <person name="Wapinski I."/>
            <person name="Roy S."/>
            <person name="Lin M.F."/>
            <person name="Heiman D.I."/>
            <person name="Young S.K."/>
            <person name="Furuya K."/>
            <person name="Guo Y."/>
            <person name="Pidoux A."/>
            <person name="Chen H.M."/>
            <person name="Robbertse B."/>
            <person name="Goldberg J.M."/>
            <person name="Aoki K."/>
            <person name="Bayne E.H."/>
            <person name="Berlin A.M."/>
            <person name="Desjardins C.A."/>
            <person name="Dobbs E."/>
            <person name="Dukaj L."/>
            <person name="Fan L."/>
            <person name="FitzGerald M.G."/>
            <person name="French C."/>
            <person name="Gujja S."/>
            <person name="Hansen K."/>
            <person name="Keifenheim D."/>
            <person name="Levin J.Z."/>
            <person name="Mosher R.A."/>
            <person name="Mueller C.A."/>
            <person name="Pfiffner J."/>
            <person name="Priest M."/>
            <person name="Russ C."/>
            <person name="Smialowska A."/>
            <person name="Swoboda P."/>
            <person name="Sykes S.M."/>
            <person name="Vaughn M."/>
            <person name="Vengrova S."/>
            <person name="Yoder R."/>
            <person name="Zeng Q."/>
            <person name="Allshire R."/>
            <person name="Baulcombe D."/>
            <person name="Birren B.W."/>
            <person name="Brown W."/>
            <person name="Ekwall K."/>
            <person name="Kellis M."/>
            <person name="Leatherwood J."/>
            <person name="Levin H."/>
            <person name="Margalit H."/>
            <person name="Martienssen R."/>
            <person name="Nieduszynski C.A."/>
            <person name="Spatafora J.W."/>
            <person name="Friedman N."/>
            <person name="Dalgaard J.Z."/>
            <person name="Baumann P."/>
            <person name="Niki H."/>
            <person name="Regev A."/>
            <person name="Nusbaum C."/>
        </authorList>
    </citation>
    <scope>REVISION OF GENE MODEL</scope>
</reference>
<reference key="3">
    <citation type="submission" date="2001-03" db="UniProtKB">
        <authorList>
            <person name="Watts F."/>
        </authorList>
    </citation>
    <scope>GENE NAME</scope>
</reference>
<reference key="4">
    <citation type="journal article" date="2006" name="Nat. Biotechnol.">
        <title>ORFeome cloning and global analysis of protein localization in the fission yeast Schizosaccharomyces pombe.</title>
        <authorList>
            <person name="Matsuyama A."/>
            <person name="Arai R."/>
            <person name="Yashiroda Y."/>
            <person name="Shirai A."/>
            <person name="Kamata A."/>
            <person name="Sekido S."/>
            <person name="Kobayashi Y."/>
            <person name="Hashimoto A."/>
            <person name="Hamamoto M."/>
            <person name="Hiraoka Y."/>
            <person name="Horinouchi S."/>
            <person name="Yoshida M."/>
        </authorList>
    </citation>
    <scope>SUBCELLULAR LOCATION [LARGE SCALE ANALYSIS]</scope>
</reference>
<reference key="5">
    <citation type="journal article" date="2008" name="J. Proteome Res.">
        <title>Phosphoproteome analysis of fission yeast.</title>
        <authorList>
            <person name="Wilson-Grady J.T."/>
            <person name="Villen J."/>
            <person name="Gygi S.P."/>
        </authorList>
    </citation>
    <scope>PHOSPHORYLATION [LARGE SCALE ANALYSIS] AT THR-526</scope>
    <scope>IDENTIFICATION BY MASS SPECTROMETRY</scope>
</reference>
<evidence type="ECO:0000250" key="1"/>
<evidence type="ECO:0000256" key="2">
    <source>
        <dbReference type="SAM" id="MobiDB-lite"/>
    </source>
</evidence>
<evidence type="ECO:0000269" key="3">
    <source>
    </source>
</evidence>
<evidence type="ECO:0000269" key="4">
    <source>
    </source>
</evidence>
<evidence type="ECO:0000305" key="5"/>
<dbReference type="EC" id="3.4.22.-"/>
<dbReference type="EMBL" id="CU329670">
    <property type="protein sequence ID" value="CAB11507.2"/>
    <property type="molecule type" value="Genomic_DNA"/>
</dbReference>
<dbReference type="PIR" id="T37822">
    <property type="entry name" value="T37822"/>
</dbReference>
<dbReference type="RefSeq" id="NP_593475.2">
    <property type="nucleotide sequence ID" value="NM_001018908.2"/>
</dbReference>
<dbReference type="SMR" id="O13769"/>
<dbReference type="BioGRID" id="278737">
    <property type="interactions" value="109"/>
</dbReference>
<dbReference type="FunCoup" id="O13769">
    <property type="interactions" value="201"/>
</dbReference>
<dbReference type="STRING" id="284812.O13769"/>
<dbReference type="MEROPS" id="C48.A09"/>
<dbReference type="iPTMnet" id="O13769"/>
<dbReference type="PaxDb" id="4896-SPAC17A5.07c.1"/>
<dbReference type="EnsemblFungi" id="SPAC17A5.07c.1">
    <property type="protein sequence ID" value="SPAC17A5.07c.1:pep"/>
    <property type="gene ID" value="SPAC17A5.07c"/>
</dbReference>
<dbReference type="GeneID" id="2542268"/>
<dbReference type="KEGG" id="spo:2542268"/>
<dbReference type="PomBase" id="SPAC17A5.07c">
    <property type="gene designation" value="ulp2"/>
</dbReference>
<dbReference type="VEuPathDB" id="FungiDB:SPAC17A5.07c"/>
<dbReference type="eggNOG" id="KOG0779">
    <property type="taxonomic scope" value="Eukaryota"/>
</dbReference>
<dbReference type="HOGENOM" id="CLU_417467_0_0_1"/>
<dbReference type="InParanoid" id="O13769"/>
<dbReference type="OMA" id="FHAKVPQ"/>
<dbReference type="PRO" id="PR:O13769"/>
<dbReference type="Proteomes" id="UP000002485">
    <property type="component" value="Chromosome I"/>
</dbReference>
<dbReference type="GO" id="GO:0005737">
    <property type="term" value="C:cytoplasm"/>
    <property type="evidence" value="ECO:0000318"/>
    <property type="project" value="GO_Central"/>
</dbReference>
<dbReference type="GO" id="GO:0010494">
    <property type="term" value="C:cytoplasmic stress granule"/>
    <property type="evidence" value="ECO:0000314"/>
    <property type="project" value="PomBase"/>
</dbReference>
<dbReference type="GO" id="GO:0005634">
    <property type="term" value="C:nucleus"/>
    <property type="evidence" value="ECO:0007005"/>
    <property type="project" value="PomBase"/>
</dbReference>
<dbReference type="GO" id="GO:0016929">
    <property type="term" value="F:deSUMOylase activity"/>
    <property type="evidence" value="ECO:0000314"/>
    <property type="project" value="PomBase"/>
</dbReference>
<dbReference type="GO" id="GO:0070139">
    <property type="term" value="F:SUMO-specific endopeptidase activity"/>
    <property type="evidence" value="ECO:0000318"/>
    <property type="project" value="GO_Central"/>
</dbReference>
<dbReference type="GO" id="GO:0016926">
    <property type="term" value="P:protein desumoylation"/>
    <property type="evidence" value="ECO:0000318"/>
    <property type="project" value="GO_Central"/>
</dbReference>
<dbReference type="GO" id="GO:0006508">
    <property type="term" value="P:proteolysis"/>
    <property type="evidence" value="ECO:0007669"/>
    <property type="project" value="UniProtKB-KW"/>
</dbReference>
<dbReference type="GO" id="GO:2000765">
    <property type="term" value="P:regulation of cytoplasmic translation"/>
    <property type="evidence" value="ECO:0000269"/>
    <property type="project" value="PomBase"/>
</dbReference>
<dbReference type="Gene3D" id="1.10.418.20">
    <property type="match status" value="1"/>
</dbReference>
<dbReference type="Gene3D" id="3.30.310.130">
    <property type="entry name" value="Ubiquitin-related"/>
    <property type="match status" value="1"/>
</dbReference>
<dbReference type="InterPro" id="IPR038765">
    <property type="entry name" value="Papain-like_cys_pep_sf"/>
</dbReference>
<dbReference type="InterPro" id="IPR003653">
    <property type="entry name" value="Peptidase_C48_C"/>
</dbReference>
<dbReference type="InterPro" id="IPR051947">
    <property type="entry name" value="Sentrin-specific_protease"/>
</dbReference>
<dbReference type="PANTHER" id="PTHR46896:SF3">
    <property type="entry name" value="FI06413P-RELATED"/>
    <property type="match status" value="1"/>
</dbReference>
<dbReference type="PANTHER" id="PTHR46896">
    <property type="entry name" value="SENTRIN-SPECIFIC PROTEASE"/>
    <property type="match status" value="1"/>
</dbReference>
<dbReference type="Pfam" id="PF02902">
    <property type="entry name" value="Peptidase_C48"/>
    <property type="match status" value="1"/>
</dbReference>
<dbReference type="SUPFAM" id="SSF54001">
    <property type="entry name" value="Cysteine proteinases"/>
    <property type="match status" value="1"/>
</dbReference>
<dbReference type="PROSITE" id="PS50600">
    <property type="entry name" value="ULP_PROTEASE"/>
    <property type="match status" value="1"/>
</dbReference>
<feature type="chain" id="PRO_0000101734" description="Ubiquitin-like-specific protease 2">
    <location>
        <begin position="1"/>
        <end position="638"/>
    </location>
</feature>
<feature type="region of interest" description="Disordered" evidence="2">
    <location>
        <begin position="1"/>
        <end position="79"/>
    </location>
</feature>
<feature type="region of interest" description="Disordered" evidence="2">
    <location>
        <begin position="238"/>
        <end position="314"/>
    </location>
</feature>
<feature type="region of interest" description="Disordered" evidence="2">
    <location>
        <begin position="610"/>
        <end position="638"/>
    </location>
</feature>
<feature type="compositionally biased region" description="Basic and acidic residues" evidence="2">
    <location>
        <begin position="1"/>
        <end position="12"/>
    </location>
</feature>
<feature type="compositionally biased region" description="Polar residues" evidence="2">
    <location>
        <begin position="238"/>
        <end position="249"/>
    </location>
</feature>
<feature type="compositionally biased region" description="Low complexity" evidence="2">
    <location>
        <begin position="250"/>
        <end position="264"/>
    </location>
</feature>
<feature type="compositionally biased region" description="Polar residues" evidence="2">
    <location>
        <begin position="267"/>
        <end position="314"/>
    </location>
</feature>
<feature type="compositionally biased region" description="Polar residues" evidence="2">
    <location>
        <begin position="610"/>
        <end position="619"/>
    </location>
</feature>
<feature type="compositionally biased region" description="Acidic residues" evidence="2">
    <location>
        <begin position="620"/>
        <end position="631"/>
    </location>
</feature>
<feature type="active site" evidence="1">
    <location>
        <position position="440"/>
    </location>
</feature>
<feature type="active site" evidence="1">
    <location>
        <position position="494"/>
    </location>
</feature>
<feature type="active site" evidence="1">
    <location>
        <position position="544"/>
    </location>
</feature>
<feature type="modified residue" description="Phosphothreonine" evidence="4">
    <location>
        <position position="526"/>
    </location>
</feature>
<comment type="subcellular location">
    <subcellularLocation>
        <location evidence="3">Nucleus</location>
    </subcellularLocation>
</comment>
<comment type="similarity">
    <text evidence="5">Belongs to the peptidase C48 family.</text>
</comment>
<accession>O13769</accession>
<protein>
    <recommendedName>
        <fullName>Ubiquitin-like-specific protease 2</fullName>
        <ecNumber>3.4.22.-</ecNumber>
    </recommendedName>
</protein>
<proteinExistence type="evidence at protein level"/>